<proteinExistence type="evidence at protein level"/>
<evidence type="ECO:0000250" key="1"/>
<evidence type="ECO:0000250" key="2">
    <source>
        <dbReference type="UniProtKB" id="O43592"/>
    </source>
</evidence>
<evidence type="ECO:0000305" key="3"/>
<comment type="function">
    <text evidence="1">Mediates the nuclear export of aminoacylated tRNAs. In the nucleus binds to tRNA and to the GTPase Ran in its active GTP-bound form. Docking of this trimeric complex to the nuclear pore complex (NPC) is mediated through binding to nucleoporins. Upon transit of a nuclear export complex into the cytoplasm, disassembling of the complex and hydrolysis of Ran-GTP to Ran-GDP (induced by RANBP1 and RANGAP1, respectively) cause release of the tRNA from the export receptor. XPOT then return to the nuclear compartment and mediate another round of transport. The directionality of nuclear export is thought to be conferred by an asymmetric distribution of the GTP- and GDP-bound forms of Ran between the cytoplasm and nucleus (By similarity).</text>
</comment>
<comment type="subunit">
    <text evidence="1">Found in a complex with XPOT, Ran and tRNA. Probably found in a complex with nucleoporins. Interacts with Ran and tRNA in a GTP-dependent manner (By similarity).</text>
</comment>
<comment type="subcellular location">
    <subcellularLocation>
        <location evidence="1">Nucleus</location>
    </subcellularLocation>
    <subcellularLocation>
        <location evidence="1">Cytoplasm</location>
    </subcellularLocation>
    <text evidence="1">Nuclear, once bound to tRNA and Ran the complex translocates to the cytoplasm. Shuttles between the nucleus and the cytoplasm (By similarity).</text>
</comment>
<comment type="similarity">
    <text evidence="3">Belongs to the exportin family.</text>
</comment>
<name>XPOT_MOUSE</name>
<reference key="1">
    <citation type="journal article" date="2009" name="PLoS Biol.">
        <title>Lineage-specific biology revealed by a finished genome assembly of the mouse.</title>
        <authorList>
            <person name="Church D.M."/>
            <person name="Goodstadt L."/>
            <person name="Hillier L.W."/>
            <person name="Zody M.C."/>
            <person name="Goldstein S."/>
            <person name="She X."/>
            <person name="Bult C.J."/>
            <person name="Agarwala R."/>
            <person name="Cherry J.L."/>
            <person name="DiCuccio M."/>
            <person name="Hlavina W."/>
            <person name="Kapustin Y."/>
            <person name="Meric P."/>
            <person name="Maglott D."/>
            <person name="Birtle Z."/>
            <person name="Marques A.C."/>
            <person name="Graves T."/>
            <person name="Zhou S."/>
            <person name="Teague B."/>
            <person name="Potamousis K."/>
            <person name="Churas C."/>
            <person name="Place M."/>
            <person name="Herschleb J."/>
            <person name="Runnheim R."/>
            <person name="Forrest D."/>
            <person name="Amos-Landgraf J."/>
            <person name="Schwartz D.C."/>
            <person name="Cheng Z."/>
            <person name="Lindblad-Toh K."/>
            <person name="Eichler E.E."/>
            <person name="Ponting C.P."/>
        </authorList>
    </citation>
    <scope>NUCLEOTIDE SEQUENCE [LARGE SCALE GENOMIC DNA]</scope>
    <source>
        <strain>C57BL/6J</strain>
    </source>
</reference>
<reference key="2">
    <citation type="journal article" date="2004" name="Genome Res.">
        <title>The status, quality, and expansion of the NIH full-length cDNA project: the Mammalian Gene Collection (MGC).</title>
        <authorList>
            <consortium name="The MGC Project Team"/>
        </authorList>
    </citation>
    <scope>NUCLEOTIDE SEQUENCE [LARGE SCALE MRNA] OF 567-963</scope>
    <source>
        <strain>C57BL/6J</strain>
        <tissue>Brain</tissue>
    </source>
</reference>
<reference key="3">
    <citation type="journal article" date="2005" name="Science">
        <title>The transcriptional landscape of the mammalian genome.</title>
        <authorList>
            <person name="Carninci P."/>
            <person name="Kasukawa T."/>
            <person name="Katayama S."/>
            <person name="Gough J."/>
            <person name="Frith M.C."/>
            <person name="Maeda N."/>
            <person name="Oyama R."/>
            <person name="Ravasi T."/>
            <person name="Lenhard B."/>
            <person name="Wells C."/>
            <person name="Kodzius R."/>
            <person name="Shimokawa K."/>
            <person name="Bajic V.B."/>
            <person name="Brenner S.E."/>
            <person name="Batalov S."/>
            <person name="Forrest A.R."/>
            <person name="Zavolan M."/>
            <person name="Davis M.J."/>
            <person name="Wilming L.G."/>
            <person name="Aidinis V."/>
            <person name="Allen J.E."/>
            <person name="Ambesi-Impiombato A."/>
            <person name="Apweiler R."/>
            <person name="Aturaliya R.N."/>
            <person name="Bailey T.L."/>
            <person name="Bansal M."/>
            <person name="Baxter L."/>
            <person name="Beisel K.W."/>
            <person name="Bersano T."/>
            <person name="Bono H."/>
            <person name="Chalk A.M."/>
            <person name="Chiu K.P."/>
            <person name="Choudhary V."/>
            <person name="Christoffels A."/>
            <person name="Clutterbuck D.R."/>
            <person name="Crowe M.L."/>
            <person name="Dalla E."/>
            <person name="Dalrymple B.P."/>
            <person name="de Bono B."/>
            <person name="Della Gatta G."/>
            <person name="di Bernardo D."/>
            <person name="Down T."/>
            <person name="Engstrom P."/>
            <person name="Fagiolini M."/>
            <person name="Faulkner G."/>
            <person name="Fletcher C.F."/>
            <person name="Fukushima T."/>
            <person name="Furuno M."/>
            <person name="Futaki S."/>
            <person name="Gariboldi M."/>
            <person name="Georgii-Hemming P."/>
            <person name="Gingeras T.R."/>
            <person name="Gojobori T."/>
            <person name="Green R.E."/>
            <person name="Gustincich S."/>
            <person name="Harbers M."/>
            <person name="Hayashi Y."/>
            <person name="Hensch T.K."/>
            <person name="Hirokawa N."/>
            <person name="Hill D."/>
            <person name="Huminiecki L."/>
            <person name="Iacono M."/>
            <person name="Ikeo K."/>
            <person name="Iwama A."/>
            <person name="Ishikawa T."/>
            <person name="Jakt M."/>
            <person name="Kanapin A."/>
            <person name="Katoh M."/>
            <person name="Kawasawa Y."/>
            <person name="Kelso J."/>
            <person name="Kitamura H."/>
            <person name="Kitano H."/>
            <person name="Kollias G."/>
            <person name="Krishnan S.P."/>
            <person name="Kruger A."/>
            <person name="Kummerfeld S.K."/>
            <person name="Kurochkin I.V."/>
            <person name="Lareau L.F."/>
            <person name="Lazarevic D."/>
            <person name="Lipovich L."/>
            <person name="Liu J."/>
            <person name="Liuni S."/>
            <person name="McWilliam S."/>
            <person name="Madan Babu M."/>
            <person name="Madera M."/>
            <person name="Marchionni L."/>
            <person name="Matsuda H."/>
            <person name="Matsuzawa S."/>
            <person name="Miki H."/>
            <person name="Mignone F."/>
            <person name="Miyake S."/>
            <person name="Morris K."/>
            <person name="Mottagui-Tabar S."/>
            <person name="Mulder N."/>
            <person name="Nakano N."/>
            <person name="Nakauchi H."/>
            <person name="Ng P."/>
            <person name="Nilsson R."/>
            <person name="Nishiguchi S."/>
            <person name="Nishikawa S."/>
            <person name="Nori F."/>
            <person name="Ohara O."/>
            <person name="Okazaki Y."/>
            <person name="Orlando V."/>
            <person name="Pang K.C."/>
            <person name="Pavan W.J."/>
            <person name="Pavesi G."/>
            <person name="Pesole G."/>
            <person name="Petrovsky N."/>
            <person name="Piazza S."/>
            <person name="Reed J."/>
            <person name="Reid J.F."/>
            <person name="Ring B.Z."/>
            <person name="Ringwald M."/>
            <person name="Rost B."/>
            <person name="Ruan Y."/>
            <person name="Salzberg S.L."/>
            <person name="Sandelin A."/>
            <person name="Schneider C."/>
            <person name="Schoenbach C."/>
            <person name="Sekiguchi K."/>
            <person name="Semple C.A."/>
            <person name="Seno S."/>
            <person name="Sessa L."/>
            <person name="Sheng Y."/>
            <person name="Shibata Y."/>
            <person name="Shimada H."/>
            <person name="Shimada K."/>
            <person name="Silva D."/>
            <person name="Sinclair B."/>
            <person name="Sperling S."/>
            <person name="Stupka E."/>
            <person name="Sugiura K."/>
            <person name="Sultana R."/>
            <person name="Takenaka Y."/>
            <person name="Taki K."/>
            <person name="Tammoja K."/>
            <person name="Tan S.L."/>
            <person name="Tang S."/>
            <person name="Taylor M.S."/>
            <person name="Tegner J."/>
            <person name="Teichmann S.A."/>
            <person name="Ueda H.R."/>
            <person name="van Nimwegen E."/>
            <person name="Verardo R."/>
            <person name="Wei C.L."/>
            <person name="Yagi K."/>
            <person name="Yamanishi H."/>
            <person name="Zabarovsky E."/>
            <person name="Zhu S."/>
            <person name="Zimmer A."/>
            <person name="Hide W."/>
            <person name="Bult C."/>
            <person name="Grimmond S.M."/>
            <person name="Teasdale R.D."/>
            <person name="Liu E.T."/>
            <person name="Brusic V."/>
            <person name="Quackenbush J."/>
            <person name="Wahlestedt C."/>
            <person name="Mattick J.S."/>
            <person name="Hume D.A."/>
            <person name="Kai C."/>
            <person name="Sasaki D."/>
            <person name="Tomaru Y."/>
            <person name="Fukuda S."/>
            <person name="Kanamori-Katayama M."/>
            <person name="Suzuki M."/>
            <person name="Aoki J."/>
            <person name="Arakawa T."/>
            <person name="Iida J."/>
            <person name="Imamura K."/>
            <person name="Itoh M."/>
            <person name="Kato T."/>
            <person name="Kawaji H."/>
            <person name="Kawagashira N."/>
            <person name="Kawashima T."/>
            <person name="Kojima M."/>
            <person name="Kondo S."/>
            <person name="Konno H."/>
            <person name="Nakano K."/>
            <person name="Ninomiya N."/>
            <person name="Nishio T."/>
            <person name="Okada M."/>
            <person name="Plessy C."/>
            <person name="Shibata K."/>
            <person name="Shiraki T."/>
            <person name="Suzuki S."/>
            <person name="Tagami M."/>
            <person name="Waki K."/>
            <person name="Watahiki A."/>
            <person name="Okamura-Oho Y."/>
            <person name="Suzuki H."/>
            <person name="Kawai J."/>
            <person name="Hayashizaki Y."/>
        </authorList>
    </citation>
    <scope>NUCLEOTIDE SEQUENCE [LARGE SCALE MRNA] OF 718-963</scope>
    <source>
        <strain>C57BL/6J</strain>
        <tissue>Embryonic head</tissue>
    </source>
</reference>
<reference key="4">
    <citation type="journal article" date="2010" name="Cell">
        <title>A tissue-specific atlas of mouse protein phosphorylation and expression.</title>
        <authorList>
            <person name="Huttlin E.L."/>
            <person name="Jedrychowski M.P."/>
            <person name="Elias J.E."/>
            <person name="Goswami T."/>
            <person name="Rad R."/>
            <person name="Beausoleil S.A."/>
            <person name="Villen J."/>
            <person name="Haas W."/>
            <person name="Sowa M.E."/>
            <person name="Gygi S.P."/>
        </authorList>
    </citation>
    <scope>IDENTIFICATION BY MASS SPECTROMETRY [LARGE SCALE ANALYSIS]</scope>
    <source>
        <tissue>Brain</tissue>
        <tissue>Brown adipose tissue</tissue>
        <tissue>Kidney</tissue>
        <tissue>Liver</tissue>
        <tissue>Lung</tissue>
        <tissue>Pancreas</tissue>
        <tissue>Spleen</tissue>
        <tissue>Testis</tissue>
    </source>
</reference>
<feature type="chain" id="PRO_0000204717" description="Exportin-T">
    <location>
        <begin position="1"/>
        <end position="963"/>
    </location>
</feature>
<feature type="modified residue" description="N-acetylmethionine" evidence="2">
    <location>
        <position position="1"/>
    </location>
</feature>
<feature type="modified residue" description="N6-acetyllysine" evidence="2">
    <location>
        <position position="635"/>
    </location>
</feature>
<feature type="sequence conflict" description="In Ref. 3; BAB29220." evidence="3" ref="3">
    <original>S</original>
    <variation>T</variation>
    <location>
        <position position="726"/>
    </location>
</feature>
<sequence length="963" mass="109734">MDEQALLGLNPNADSDFRQRALAYFEQLKISPDAWQVCAEALAQKTYSDDHVKFFCFQVLEHQVKYKYSELSTAQQQLIRETLLSWLQAQMQNPQPEKTFIRNKAAQVFALLFVTEYLTKWPKFFFDILSVVDLNPRGVDLYLRILMAIDSELVDRDVVHTSEASGLENTLIKDTMREQCIPNLVESWYQILHNYQYTNSEVLCQCLEVVGAYVSWIDLSLIANDRFINMLLGHMSVEVLREEACDCLFEIVNKGMDPVDKMKLVESLCQVLQTAGFFSIDQEEDLDFVARFSKLVNGMGQSLIVSWTKLIKNGAVKNAQEALEAIETKVPLMLQLLVHEDDDISSNIIGFCYDYLHILKQLPVLSDQQKANVEAIMLAVMKKLTYDEEYNFENEGEDEAMFVEYRKQLKLLLDRLAQVSPELVLASVRRVFSATLQNWQTTRFMEVEVAVRLLYMLAEALPVSHGAHFSGDVSKASALQDMMRTLVTSGVSSYQHTSVTLEFFETVVRYEKFFTVEPQHIPCVLMAFLDHRGLWHSSAKVRSRTAYLFSRFVKSLNKQMNPYIEEILNRIQDLLALSPPENGYQSLLSSDDQLFIYETAGALIVNSEYPAENKQALMKDLLTPLMERFKVLLEKLMMAQDEERQASLADSLNHAVGFASRTSKAFSNKQTVKQCGCSQVYLDCLQTFLPALSCPLQKDVLRSGVRTFLHRMIICLEEEVLPFIPSASEHMLKDCEAKDLQEFIPLINQITAKFKMQVSPFLQQMFMPLLHAIFEVLLRPAEDNDQSAALEKQMLRRSYFAFLQTVTGSGMSEVIANQGAENVEQVLVTIIQGAVDYPDPIAQKTCFIILSKLVELWGGKDGPVGFADFVYKHIVPACFLAPLKQTFDLADAQTVLALSECAVTLKTIHLKRGPECVQYLQQEYLPSLQVAPEIIQEFCQALQQPDAKVFKNYLKVFFQRAKP</sequence>
<accession>Q9CRT8</accession>
<accession>Q52KI1</accession>
<gene>
    <name type="primary">Xpot</name>
</gene>
<organism>
    <name type="scientific">Mus musculus</name>
    <name type="common">Mouse</name>
    <dbReference type="NCBI Taxonomy" id="10090"/>
    <lineage>
        <taxon>Eukaryota</taxon>
        <taxon>Metazoa</taxon>
        <taxon>Chordata</taxon>
        <taxon>Craniata</taxon>
        <taxon>Vertebrata</taxon>
        <taxon>Euteleostomi</taxon>
        <taxon>Mammalia</taxon>
        <taxon>Eutheria</taxon>
        <taxon>Euarchontoglires</taxon>
        <taxon>Glires</taxon>
        <taxon>Rodentia</taxon>
        <taxon>Myomorpha</taxon>
        <taxon>Muroidea</taxon>
        <taxon>Muridae</taxon>
        <taxon>Murinae</taxon>
        <taxon>Mus</taxon>
        <taxon>Mus</taxon>
    </lineage>
</organism>
<protein>
    <recommendedName>
        <fullName>Exportin-T</fullName>
    </recommendedName>
    <alternativeName>
        <fullName>Exportin(tRNA)</fullName>
    </alternativeName>
    <alternativeName>
        <fullName>tRNA exportin</fullName>
    </alternativeName>
</protein>
<keyword id="KW-0007">Acetylation</keyword>
<keyword id="KW-0963">Cytoplasm</keyword>
<keyword id="KW-0539">Nucleus</keyword>
<keyword id="KW-1185">Reference proteome</keyword>
<keyword id="KW-0694">RNA-binding</keyword>
<keyword id="KW-0813">Transport</keyword>
<keyword id="KW-0820">tRNA-binding</keyword>
<dbReference type="EMBL" id="AC124992">
    <property type="status" value="NOT_ANNOTATED_CDS"/>
    <property type="molecule type" value="Genomic_DNA"/>
</dbReference>
<dbReference type="EMBL" id="BC094337">
    <property type="protein sequence ID" value="AAH94337.1"/>
    <property type="molecule type" value="mRNA"/>
</dbReference>
<dbReference type="EMBL" id="AK014235">
    <property type="protein sequence ID" value="BAB29220.1"/>
    <property type="molecule type" value="mRNA"/>
</dbReference>
<dbReference type="SMR" id="Q9CRT8"/>
<dbReference type="FunCoup" id="Q9CRT8">
    <property type="interactions" value="4372"/>
</dbReference>
<dbReference type="IntAct" id="Q9CRT8">
    <property type="interactions" value="7"/>
</dbReference>
<dbReference type="MINT" id="Q9CRT8"/>
<dbReference type="STRING" id="10090.ENSMUSP00000043488"/>
<dbReference type="iPTMnet" id="Q9CRT8"/>
<dbReference type="PhosphoSitePlus" id="Q9CRT8"/>
<dbReference type="SwissPalm" id="Q9CRT8"/>
<dbReference type="PaxDb" id="10090-ENSMUSP00000043488"/>
<dbReference type="PeptideAtlas" id="Q9CRT8"/>
<dbReference type="ProteomicsDB" id="299797"/>
<dbReference type="Pumba" id="Q9CRT8"/>
<dbReference type="Antibodypedia" id="16571">
    <property type="antibodies" value="123 antibodies from 25 providers"/>
</dbReference>
<dbReference type="Ensembl" id="ENSMUST00000039810.8">
    <property type="protein sequence ID" value="ENSMUSP00000043488.8"/>
    <property type="gene ID" value="ENSMUSG00000034667.9"/>
</dbReference>
<dbReference type="UCSC" id="uc007hfv.1">
    <property type="organism name" value="mouse"/>
</dbReference>
<dbReference type="AGR" id="MGI:1920442"/>
<dbReference type="MGI" id="MGI:1920442">
    <property type="gene designation" value="Xpot"/>
</dbReference>
<dbReference type="VEuPathDB" id="HostDB:ENSMUSG00000034667"/>
<dbReference type="eggNOG" id="KOG2021">
    <property type="taxonomic scope" value="Eukaryota"/>
</dbReference>
<dbReference type="GeneTree" id="ENSGT00390000007890"/>
<dbReference type="HOGENOM" id="CLU_004414_1_0_1"/>
<dbReference type="InParanoid" id="Q9CRT8"/>
<dbReference type="OrthoDB" id="26399at2759"/>
<dbReference type="PhylomeDB" id="Q9CRT8"/>
<dbReference type="TreeFam" id="TF314001"/>
<dbReference type="ChiTaRS" id="Xpot">
    <property type="organism name" value="mouse"/>
</dbReference>
<dbReference type="PRO" id="PR:Q9CRT8"/>
<dbReference type="Proteomes" id="UP000000589">
    <property type="component" value="Chromosome 10"/>
</dbReference>
<dbReference type="RNAct" id="Q9CRT8">
    <property type="molecule type" value="protein"/>
</dbReference>
<dbReference type="Bgee" id="ENSMUSG00000034667">
    <property type="expression patterns" value="Expressed in metanephric ureteric bud and 258 other cell types or tissues"/>
</dbReference>
<dbReference type="ExpressionAtlas" id="Q9CRT8">
    <property type="expression patterns" value="baseline and differential"/>
</dbReference>
<dbReference type="GO" id="GO:0005829">
    <property type="term" value="C:cytosol"/>
    <property type="evidence" value="ECO:0007669"/>
    <property type="project" value="Ensembl"/>
</dbReference>
<dbReference type="GO" id="GO:0005643">
    <property type="term" value="C:nuclear pore"/>
    <property type="evidence" value="ECO:0007669"/>
    <property type="project" value="Ensembl"/>
</dbReference>
<dbReference type="GO" id="GO:0005654">
    <property type="term" value="C:nucleoplasm"/>
    <property type="evidence" value="ECO:0007669"/>
    <property type="project" value="Ensembl"/>
</dbReference>
<dbReference type="GO" id="GO:0031267">
    <property type="term" value="F:small GTPase binding"/>
    <property type="evidence" value="ECO:0007669"/>
    <property type="project" value="InterPro"/>
</dbReference>
<dbReference type="GO" id="GO:0000049">
    <property type="term" value="F:tRNA binding"/>
    <property type="evidence" value="ECO:0007669"/>
    <property type="project" value="UniProtKB-KW"/>
</dbReference>
<dbReference type="GO" id="GO:0006886">
    <property type="term" value="P:intracellular protein transport"/>
    <property type="evidence" value="ECO:0007669"/>
    <property type="project" value="InterPro"/>
</dbReference>
<dbReference type="GO" id="GO:0071528">
    <property type="term" value="P:tRNA re-export from nucleus"/>
    <property type="evidence" value="ECO:0007669"/>
    <property type="project" value="InterPro"/>
</dbReference>
<dbReference type="FunFam" id="1.25.10.10:FF:000105">
    <property type="entry name" value="Exportin for tRNA"/>
    <property type="match status" value="1"/>
</dbReference>
<dbReference type="Gene3D" id="1.25.10.10">
    <property type="entry name" value="Leucine-rich Repeat Variant"/>
    <property type="match status" value="1"/>
</dbReference>
<dbReference type="InterPro" id="IPR011989">
    <property type="entry name" value="ARM-like"/>
</dbReference>
<dbReference type="InterPro" id="IPR016024">
    <property type="entry name" value="ARM-type_fold"/>
</dbReference>
<dbReference type="InterPro" id="IPR013598">
    <property type="entry name" value="Exportin-1/Importin-b-like"/>
</dbReference>
<dbReference type="InterPro" id="IPR045546">
    <property type="entry name" value="Exportin-T_C"/>
</dbReference>
<dbReference type="InterPro" id="IPR001494">
    <property type="entry name" value="Importin-beta_N"/>
</dbReference>
<dbReference type="InterPro" id="IPR040017">
    <property type="entry name" value="XPOT"/>
</dbReference>
<dbReference type="PANTHER" id="PTHR15952:SF11">
    <property type="entry name" value="EXPORTIN-T"/>
    <property type="match status" value="1"/>
</dbReference>
<dbReference type="PANTHER" id="PTHR15952">
    <property type="entry name" value="EXPORTIN-T/LOS1"/>
    <property type="match status" value="1"/>
</dbReference>
<dbReference type="Pfam" id="PF19282">
    <property type="entry name" value="Exportin-T"/>
    <property type="match status" value="1"/>
</dbReference>
<dbReference type="Pfam" id="PF03810">
    <property type="entry name" value="IBN_N"/>
    <property type="match status" value="1"/>
</dbReference>
<dbReference type="Pfam" id="PF08389">
    <property type="entry name" value="Xpo1"/>
    <property type="match status" value="1"/>
</dbReference>
<dbReference type="SMART" id="SM00913">
    <property type="entry name" value="IBN_N"/>
    <property type="match status" value="1"/>
</dbReference>
<dbReference type="SUPFAM" id="SSF48371">
    <property type="entry name" value="ARM repeat"/>
    <property type="match status" value="1"/>
</dbReference>